<organism>
    <name type="scientific">Chromohalobacter salexigens (strain ATCC BAA-138 / DSM 3043 / CIP 106854 / NCIMB 13768 / 1H11)</name>
    <dbReference type="NCBI Taxonomy" id="290398"/>
    <lineage>
        <taxon>Bacteria</taxon>
        <taxon>Pseudomonadati</taxon>
        <taxon>Pseudomonadota</taxon>
        <taxon>Gammaproteobacteria</taxon>
        <taxon>Oceanospirillales</taxon>
        <taxon>Halomonadaceae</taxon>
        <taxon>Chromohalobacter</taxon>
    </lineage>
</organism>
<proteinExistence type="inferred from homology"/>
<gene>
    <name type="ordered locus">Csal_1884</name>
</gene>
<name>YIDD_CHRSD</name>
<sequence length="105" mass="11694">MRPGKRRPLTRLPFALLSWGMIGLLRVYQYGISPLLGPRCRFWPSCSQYAVEAIQVHGPLKGAWLALKRIVKCHPGHPGGVDPVPPGPHETPRKTSTHDDEPPSR</sequence>
<protein>
    <recommendedName>
        <fullName evidence="1">Putative membrane protein insertion efficiency factor</fullName>
    </recommendedName>
</protein>
<reference key="1">
    <citation type="journal article" date="2011" name="Stand. Genomic Sci.">
        <title>Complete genome sequence of the halophilic and highly halotolerant Chromohalobacter salexigens type strain (1H11(T)).</title>
        <authorList>
            <person name="Copeland A."/>
            <person name="O'Connor K."/>
            <person name="Lucas S."/>
            <person name="Lapidus A."/>
            <person name="Berry K.W."/>
            <person name="Detter J.C."/>
            <person name="Del Rio T.G."/>
            <person name="Hammon N."/>
            <person name="Dalin E."/>
            <person name="Tice H."/>
            <person name="Pitluck S."/>
            <person name="Bruce D."/>
            <person name="Goodwin L."/>
            <person name="Han C."/>
            <person name="Tapia R."/>
            <person name="Saunders E."/>
            <person name="Schmutz J."/>
            <person name="Brettin T."/>
            <person name="Larimer F."/>
            <person name="Land M."/>
            <person name="Hauser L."/>
            <person name="Vargas C."/>
            <person name="Nieto J.J."/>
            <person name="Kyrpides N.C."/>
            <person name="Ivanova N."/>
            <person name="Goker M."/>
            <person name="Klenk H.P."/>
            <person name="Csonka L.N."/>
            <person name="Woyke T."/>
        </authorList>
    </citation>
    <scope>NUCLEOTIDE SEQUENCE [LARGE SCALE GENOMIC DNA]</scope>
    <source>
        <strain>ATCC BAA-138 / DSM 3043 / CIP 106854 / NCIMB 13768 / 1H11</strain>
    </source>
</reference>
<evidence type="ECO:0000255" key="1">
    <source>
        <dbReference type="HAMAP-Rule" id="MF_00386"/>
    </source>
</evidence>
<evidence type="ECO:0000256" key="2">
    <source>
        <dbReference type="SAM" id="MobiDB-lite"/>
    </source>
</evidence>
<keyword id="KW-0997">Cell inner membrane</keyword>
<keyword id="KW-1003">Cell membrane</keyword>
<keyword id="KW-0472">Membrane</keyword>
<keyword id="KW-1185">Reference proteome</keyword>
<feature type="chain" id="PRO_0000253099" description="Putative membrane protein insertion efficiency factor">
    <location>
        <begin position="1"/>
        <end position="105"/>
    </location>
</feature>
<feature type="region of interest" description="Disordered" evidence="2">
    <location>
        <begin position="76"/>
        <end position="105"/>
    </location>
</feature>
<feature type="compositionally biased region" description="Basic and acidic residues" evidence="2">
    <location>
        <begin position="90"/>
        <end position="105"/>
    </location>
</feature>
<accession>Q1QWC2</accession>
<comment type="function">
    <text evidence="1">Could be involved in insertion of integral membrane proteins into the membrane.</text>
</comment>
<comment type="subcellular location">
    <subcellularLocation>
        <location evidence="1">Cell inner membrane</location>
        <topology evidence="1">Peripheral membrane protein</topology>
        <orientation evidence="1">Cytoplasmic side</orientation>
    </subcellularLocation>
</comment>
<comment type="similarity">
    <text evidence="1">Belongs to the UPF0161 family.</text>
</comment>
<dbReference type="EMBL" id="CP000285">
    <property type="protein sequence ID" value="ABE59236.1"/>
    <property type="molecule type" value="Genomic_DNA"/>
</dbReference>
<dbReference type="RefSeq" id="WP_011507182.1">
    <property type="nucleotide sequence ID" value="NC_007963.1"/>
</dbReference>
<dbReference type="STRING" id="290398.Csal_1884"/>
<dbReference type="GeneID" id="95334600"/>
<dbReference type="KEGG" id="csa:Csal_1884"/>
<dbReference type="eggNOG" id="COG0759">
    <property type="taxonomic scope" value="Bacteria"/>
</dbReference>
<dbReference type="HOGENOM" id="CLU_144811_2_2_6"/>
<dbReference type="OrthoDB" id="9801753at2"/>
<dbReference type="Proteomes" id="UP000000239">
    <property type="component" value="Chromosome"/>
</dbReference>
<dbReference type="GO" id="GO:0005886">
    <property type="term" value="C:plasma membrane"/>
    <property type="evidence" value="ECO:0007669"/>
    <property type="project" value="UniProtKB-SubCell"/>
</dbReference>
<dbReference type="HAMAP" id="MF_00386">
    <property type="entry name" value="UPF0161_YidD"/>
    <property type="match status" value="1"/>
</dbReference>
<dbReference type="InterPro" id="IPR002696">
    <property type="entry name" value="Membr_insert_effic_factor_YidD"/>
</dbReference>
<dbReference type="NCBIfam" id="TIGR00278">
    <property type="entry name" value="membrane protein insertion efficiency factor YidD"/>
    <property type="match status" value="1"/>
</dbReference>
<dbReference type="PANTHER" id="PTHR33383">
    <property type="entry name" value="MEMBRANE PROTEIN INSERTION EFFICIENCY FACTOR-RELATED"/>
    <property type="match status" value="1"/>
</dbReference>
<dbReference type="PANTHER" id="PTHR33383:SF1">
    <property type="entry name" value="MEMBRANE PROTEIN INSERTION EFFICIENCY FACTOR-RELATED"/>
    <property type="match status" value="1"/>
</dbReference>
<dbReference type="Pfam" id="PF01809">
    <property type="entry name" value="YidD"/>
    <property type="match status" value="1"/>
</dbReference>
<dbReference type="SMART" id="SM01234">
    <property type="entry name" value="Haemolytic"/>
    <property type="match status" value="1"/>
</dbReference>